<evidence type="ECO:0000255" key="1">
    <source>
        <dbReference type="HAMAP-Rule" id="MF_01390"/>
    </source>
</evidence>
<evidence type="ECO:0000305" key="2"/>
<geneLocation type="chloroplast"/>
<keyword id="KW-0150">Chloroplast</keyword>
<keyword id="KW-0507">mRNA processing</keyword>
<keyword id="KW-0934">Plastid</keyword>
<keyword id="KW-0694">RNA-binding</keyword>
<keyword id="KW-0819">tRNA processing</keyword>
<reference key="1">
    <citation type="journal article" date="2000" name="Mol. Phylogenet. Evol.">
        <title>Phylogeny of taxaceae and Cephalotaxaceae genera inferred from chloroplast matK gene and nuclear rDNA ITS region.</title>
        <authorList>
            <person name="Cheng Y."/>
            <person name="Nicolson R.G."/>
            <person name="Tripp K."/>
            <person name="Chaw S."/>
        </authorList>
    </citation>
    <scope>NUCLEOTIDE SEQUENCE [GENOMIC DNA]</scope>
    <source>
        <tissue>Leaf</tissue>
    </source>
</reference>
<reference key="2">
    <citation type="journal article" date="2000" name="Am. J. Bot.">
        <title>Relationships within Cupressaceae sensu lato: a combined morphological and molecular approach.</title>
        <authorList>
            <person name="Gadek P.A."/>
            <person name="Alpers D.L."/>
            <person name="Heslewood M.M."/>
            <person name="Quinn C.J."/>
        </authorList>
    </citation>
    <scope>NUCLEOTIDE SEQUENCE [GENOMIC DNA]</scope>
</reference>
<reference key="3">
    <citation type="journal article" date="2008" name="BMC Plant Biol.">
        <title>Complete nucleotide sequence of the Cryptomeria japonica D. Don. chloroplast genome and comparative chloroplast genomics: diversified genomic structure of coniferous species.</title>
        <authorList>
            <person name="Hirao T."/>
            <person name="Watanabe A."/>
            <person name="Kurita M."/>
            <person name="Kondo T."/>
            <person name="Takata K."/>
        </authorList>
    </citation>
    <scope>NUCLEOTIDE SEQUENCE [LARGE SCALE GENOMIC DNA]</scope>
</reference>
<comment type="function">
    <text evidence="1">Usually encoded in the trnK tRNA gene intron. Probably assists in splicing its own and other chloroplast group II introns.</text>
</comment>
<comment type="subcellular location">
    <subcellularLocation>
        <location>Plastid</location>
        <location>Chloroplast</location>
    </subcellularLocation>
</comment>
<comment type="similarity">
    <text evidence="1">Belongs to the intron maturase 2 family. MatK subfamily.</text>
</comment>
<organism>
    <name type="scientific">Cryptomeria japonica</name>
    <name type="common">Japanese cedar</name>
    <name type="synonym">Cupressus japonica</name>
    <dbReference type="NCBI Taxonomy" id="3369"/>
    <lineage>
        <taxon>Eukaryota</taxon>
        <taxon>Viridiplantae</taxon>
        <taxon>Streptophyta</taxon>
        <taxon>Embryophyta</taxon>
        <taxon>Tracheophyta</taxon>
        <taxon>Spermatophyta</taxon>
        <taxon>Pinopsida</taxon>
        <taxon>Pinidae</taxon>
        <taxon>Conifers II</taxon>
        <taxon>Cupressales</taxon>
        <taxon>Cupressaceae</taxon>
        <taxon>Cryptomeria</taxon>
    </lineage>
</organism>
<dbReference type="EMBL" id="AB023984">
    <property type="protein sequence ID" value="BAA86040.1"/>
    <property type="molecule type" value="Genomic_DNA"/>
</dbReference>
<dbReference type="EMBL" id="AF152184">
    <property type="protein sequence ID" value="AAF25737.1"/>
    <property type="molecule type" value="Genomic_DNA"/>
</dbReference>
<dbReference type="EMBL" id="AP009377">
    <property type="protein sequence ID" value="BAG16671.1"/>
    <property type="molecule type" value="Genomic_DNA"/>
</dbReference>
<dbReference type="RefSeq" id="YP_001806673.1">
    <property type="nucleotide sequence ID" value="NC_010548.1"/>
</dbReference>
<dbReference type="GeneID" id="6166635"/>
<dbReference type="KEGG" id="cjf:6166635"/>
<dbReference type="OrthoDB" id="1886907at2759"/>
<dbReference type="GO" id="GO:0009507">
    <property type="term" value="C:chloroplast"/>
    <property type="evidence" value="ECO:0007669"/>
    <property type="project" value="UniProtKB-SubCell"/>
</dbReference>
<dbReference type="GO" id="GO:0003723">
    <property type="term" value="F:RNA binding"/>
    <property type="evidence" value="ECO:0007669"/>
    <property type="project" value="UniProtKB-KW"/>
</dbReference>
<dbReference type="GO" id="GO:0006397">
    <property type="term" value="P:mRNA processing"/>
    <property type="evidence" value="ECO:0007669"/>
    <property type="project" value="UniProtKB-KW"/>
</dbReference>
<dbReference type="GO" id="GO:0008380">
    <property type="term" value="P:RNA splicing"/>
    <property type="evidence" value="ECO:0007669"/>
    <property type="project" value="UniProtKB-UniRule"/>
</dbReference>
<dbReference type="GO" id="GO:0008033">
    <property type="term" value="P:tRNA processing"/>
    <property type="evidence" value="ECO:0007669"/>
    <property type="project" value="UniProtKB-KW"/>
</dbReference>
<dbReference type="HAMAP" id="MF_01390">
    <property type="entry name" value="MatK"/>
    <property type="match status" value="1"/>
</dbReference>
<dbReference type="InterPro" id="IPR024937">
    <property type="entry name" value="Domain_X"/>
</dbReference>
<dbReference type="InterPro" id="IPR002866">
    <property type="entry name" value="Maturase_MatK"/>
</dbReference>
<dbReference type="InterPro" id="IPR024942">
    <property type="entry name" value="Maturase_MatK_N"/>
</dbReference>
<dbReference type="PANTHER" id="PTHR34811">
    <property type="entry name" value="MATURASE K"/>
    <property type="match status" value="1"/>
</dbReference>
<dbReference type="PANTHER" id="PTHR34811:SF1">
    <property type="entry name" value="MATURASE K"/>
    <property type="match status" value="1"/>
</dbReference>
<dbReference type="Pfam" id="PF01348">
    <property type="entry name" value="Intron_maturas2"/>
    <property type="match status" value="1"/>
</dbReference>
<dbReference type="Pfam" id="PF01824">
    <property type="entry name" value="MatK_N"/>
    <property type="match status" value="1"/>
</dbReference>
<sequence length="507" mass="60605">MGEFQRNENKHKSWQQFFLYPLFFREDLYAIAHDHHLDRSGSSEPTEILVSNFLSFLTVKRSIRRMRKQTNSISLFGNSDPNKLIECNKNFYSKSILEGFTIVLEVSFAMRSKHFIEGMNGWNSLRSIHCLFPLMEDKLPHSNYISDIRVPYSIHPEILVRIFRRWIRDAPSLHLLRSILHEWKNSFSRENLQKALITQIENTRFSLFLWNSYVYECESFLIPLIKRFFNSQSLLYGSFPDRTHFDKKIKDIVLFPRKISTKKIWLLKDSFIHYVRYGERSLMALKGTHLQVKKCRYHLFHFWQYYFHLWFQPYRICSLQLSKTSFSFLGYFLHVKMKPLVVRVKMLDDLFITDLITNELNPIAPIRAILFFLAKEKFCDISGWPISKLSWTSLSDDDILDRFDRIWINLFHYYSGSINQEGLYHIKYILLLSCAKTLACKHKSTIRVVREQLGSELFTKSFSKEKFISSSFSKTRSQRERIWNSEISQINPLANFWQKMQNKQIEN</sequence>
<name>MATK_CRYJA</name>
<protein>
    <recommendedName>
        <fullName evidence="1">Maturase K</fullName>
    </recommendedName>
    <alternativeName>
        <fullName evidence="1">Intron maturase</fullName>
    </alternativeName>
</protein>
<gene>
    <name evidence="1" type="primary">matK</name>
</gene>
<feature type="chain" id="PRO_0000143345" description="Maturase K">
    <location>
        <begin position="1"/>
        <end position="507"/>
    </location>
</feature>
<feature type="sequence conflict" description="In Ref. 2; AAF25737." evidence="2" ref="2">
    <original>E</original>
    <variation>G</variation>
    <location>
        <position position="117"/>
    </location>
</feature>
<feature type="sequence conflict" description="In Ref. 1; BAA86040." evidence="2" ref="1">
    <original>S</original>
    <variation>L</variation>
    <location>
        <position position="477"/>
    </location>
</feature>
<proteinExistence type="inferred from homology"/>
<accession>Q9MVW4</accession>
<accession>B1VKG0</accession>
<accession>Q9MSV3</accession>